<protein>
    <recommendedName>
        <fullName>Krueppel-like factor 6</fullName>
    </recommendedName>
    <alternativeName>
        <fullName>Core promoter element-binding protein</fullName>
    </alternativeName>
    <alternativeName>
        <fullName>Transcription factor Zf9</fullName>
    </alternativeName>
</protein>
<gene>
    <name type="primary">Klf6</name>
    <name type="synonym">Copeb</name>
</gene>
<name>KLF6_RAT</name>
<organism>
    <name type="scientific">Rattus norvegicus</name>
    <name type="common">Rat</name>
    <dbReference type="NCBI Taxonomy" id="10116"/>
    <lineage>
        <taxon>Eukaryota</taxon>
        <taxon>Metazoa</taxon>
        <taxon>Chordata</taxon>
        <taxon>Craniata</taxon>
        <taxon>Vertebrata</taxon>
        <taxon>Euteleostomi</taxon>
        <taxon>Mammalia</taxon>
        <taxon>Eutheria</taxon>
        <taxon>Euarchontoglires</taxon>
        <taxon>Glires</taxon>
        <taxon>Rodentia</taxon>
        <taxon>Myomorpha</taxon>
        <taxon>Muroidea</taxon>
        <taxon>Muridae</taxon>
        <taxon>Murinae</taxon>
        <taxon>Rattus</taxon>
    </lineage>
</organism>
<sequence>MDVLPMCSIFQELQIVHETGYFSALPSLEEYWQQTCLELERYLQSEPCYVSASEIKFDNQEDLWTKIILARERKEESELKISSSPPEDSLISSGFNYNLETNSLNSDVSSESSDSSEELSPTTKFTSDPIGEVLVNSGNLSSSVISTPPSSPEVNRESSQLWGCGPGDLPSPGKVRSGTSGKSGDKGSGDASPDGRRRVHRCHFNGCRKVYTKSSHLKAHQRTHTGEKPYRCSWEGCEWRFARSDELTRHFRKHTGAKPFKCSHCDRCFSRSDHLALHMKRHL</sequence>
<accession>O35819</accession>
<accession>Q4V8M5</accession>
<reference key="1">
    <citation type="journal article" date="1998" name="Proc. Natl. Acad. Sci. U.S.A.">
        <title>Zf9, a Kruppel-like transcription factor up-regulated in vivo during early hepatic fibrosis.</title>
        <authorList>
            <person name="Ratziu V."/>
            <person name="Lalazar A."/>
            <person name="Wong L."/>
            <person name="Dang Q."/>
            <person name="Collins C."/>
            <person name="Shaulian E."/>
            <person name="Jensen S."/>
            <person name="Friedman S.L."/>
        </authorList>
    </citation>
    <scope>NUCLEOTIDE SEQUENCE [MRNA]</scope>
</reference>
<reference key="2">
    <citation type="journal article" date="2004" name="Genome Res.">
        <title>The status, quality, and expansion of the NIH full-length cDNA project: the Mammalian Gene Collection (MGC).</title>
        <authorList>
            <consortium name="The MGC Project Team"/>
        </authorList>
    </citation>
    <scope>NUCLEOTIDE SEQUENCE [LARGE SCALE MRNA]</scope>
    <source>
        <tissue>Placenta</tissue>
    </source>
</reference>
<feature type="chain" id="PRO_0000047173" description="Krueppel-like factor 6">
    <location>
        <begin position="1"/>
        <end position="283"/>
    </location>
</feature>
<feature type="zinc finger region" description="C2H2-type 1" evidence="3">
    <location>
        <begin position="200"/>
        <end position="224"/>
    </location>
</feature>
<feature type="zinc finger region" description="C2H2-type 2" evidence="3">
    <location>
        <begin position="230"/>
        <end position="254"/>
    </location>
</feature>
<feature type="zinc finger region" description="C2H2-type 3" evidence="3">
    <location>
        <begin position="260"/>
        <end position="282"/>
    </location>
</feature>
<feature type="region of interest" description="Disordered" evidence="4">
    <location>
        <begin position="102"/>
        <end position="198"/>
    </location>
</feature>
<feature type="short sequence motif" description="9aaTAD; inactive" evidence="2">
    <location>
        <begin position="62"/>
        <end position="70"/>
    </location>
</feature>
<feature type="compositionally biased region" description="Low complexity" evidence="4">
    <location>
        <begin position="102"/>
        <end position="113"/>
    </location>
</feature>
<feature type="compositionally biased region" description="Low complexity" evidence="4">
    <location>
        <begin position="133"/>
        <end position="148"/>
    </location>
</feature>
<feature type="compositionally biased region" description="Basic and acidic residues" evidence="4">
    <location>
        <begin position="183"/>
        <end position="196"/>
    </location>
</feature>
<evidence type="ECO:0000250" key="1"/>
<evidence type="ECO:0000250" key="2">
    <source>
        <dbReference type="UniProtKB" id="Q99612"/>
    </source>
</evidence>
<evidence type="ECO:0000255" key="3">
    <source>
        <dbReference type="PROSITE-ProRule" id="PRU00042"/>
    </source>
</evidence>
<evidence type="ECO:0000256" key="4">
    <source>
        <dbReference type="SAM" id="MobiDB-lite"/>
    </source>
</evidence>
<evidence type="ECO:0000305" key="5"/>
<keyword id="KW-0010">Activator</keyword>
<keyword id="KW-0238">DNA-binding</keyword>
<keyword id="KW-0479">Metal-binding</keyword>
<keyword id="KW-0539">Nucleus</keyword>
<keyword id="KW-1185">Reference proteome</keyword>
<keyword id="KW-0677">Repeat</keyword>
<keyword id="KW-0804">Transcription</keyword>
<keyword id="KW-0805">Transcription regulation</keyword>
<keyword id="KW-0862">Zinc</keyword>
<keyword id="KW-0863">Zinc-finger</keyword>
<comment type="function">
    <text evidence="1">Transcriptional activator. Binds a GC box motif. Could play a role in B-cell growth and development (By similarity).</text>
</comment>
<comment type="subunit">
    <text evidence="2">Interacts with ZZEF1.</text>
</comment>
<comment type="subcellular location">
    <subcellularLocation>
        <location evidence="1">Nucleus</location>
    </subcellularLocation>
</comment>
<comment type="domain">
    <text>The acidic N-terminal part may favor interaction with the basic domain of transcription factors.</text>
</comment>
<comment type="domain">
    <text evidence="2">The 9aaTAD motif is a transactivation domain present in a large number of yeast and animal transcription factors. In KLF6, the motif is inactive.</text>
</comment>
<comment type="similarity">
    <text evidence="5">Belongs to the krueppel C2H2-type zinc-finger protein family.</text>
</comment>
<dbReference type="EMBL" id="AF001417">
    <property type="protein sequence ID" value="AAC40204.1"/>
    <property type="molecule type" value="mRNA"/>
</dbReference>
<dbReference type="EMBL" id="BC097306">
    <property type="protein sequence ID" value="AAH97306.1"/>
    <property type="molecule type" value="mRNA"/>
</dbReference>
<dbReference type="SMR" id="O35819"/>
<dbReference type="FunCoup" id="O35819">
    <property type="interactions" value="445"/>
</dbReference>
<dbReference type="STRING" id="10116.ENSRNOP00000023033"/>
<dbReference type="PhosphoSitePlus" id="O35819"/>
<dbReference type="PaxDb" id="10116-ENSRNOP00000023033"/>
<dbReference type="UCSC" id="RGD:62389">
    <property type="organism name" value="rat"/>
</dbReference>
<dbReference type="AGR" id="RGD:62389"/>
<dbReference type="RGD" id="62389">
    <property type="gene designation" value="Klf6"/>
</dbReference>
<dbReference type="VEuPathDB" id="HostDB:ENSRNOG00000016885"/>
<dbReference type="eggNOG" id="KOG1721">
    <property type="taxonomic scope" value="Eukaryota"/>
</dbReference>
<dbReference type="HOGENOM" id="CLU_002678_33_4_1"/>
<dbReference type="InParanoid" id="O35819"/>
<dbReference type="OrthoDB" id="4748970at2759"/>
<dbReference type="PhylomeDB" id="O35819"/>
<dbReference type="PRO" id="PR:O35819"/>
<dbReference type="Proteomes" id="UP000002494">
    <property type="component" value="Chromosome 17"/>
</dbReference>
<dbReference type="Bgee" id="ENSRNOG00000016885">
    <property type="expression patterns" value="Expressed in lung and 18 other cell types or tissues"/>
</dbReference>
<dbReference type="ExpressionAtlas" id="O35819">
    <property type="expression patterns" value="baseline and differential"/>
</dbReference>
<dbReference type="GO" id="GO:0005737">
    <property type="term" value="C:cytoplasm"/>
    <property type="evidence" value="ECO:0000266"/>
    <property type="project" value="RGD"/>
</dbReference>
<dbReference type="GO" id="GO:0005634">
    <property type="term" value="C:nucleus"/>
    <property type="evidence" value="ECO:0000266"/>
    <property type="project" value="RGD"/>
</dbReference>
<dbReference type="GO" id="GO:0001228">
    <property type="term" value="F:DNA-binding transcription activator activity, RNA polymerase II-specific"/>
    <property type="evidence" value="ECO:0000266"/>
    <property type="project" value="RGD"/>
</dbReference>
<dbReference type="GO" id="GO:0003700">
    <property type="term" value="F:DNA-binding transcription factor activity"/>
    <property type="evidence" value="ECO:0000314"/>
    <property type="project" value="RGD"/>
</dbReference>
<dbReference type="GO" id="GO:0000981">
    <property type="term" value="F:DNA-binding transcription factor activity, RNA polymerase II-specific"/>
    <property type="evidence" value="ECO:0000318"/>
    <property type="project" value="GO_Central"/>
</dbReference>
<dbReference type="GO" id="GO:0003690">
    <property type="term" value="F:double-stranded DNA binding"/>
    <property type="evidence" value="ECO:0000314"/>
    <property type="project" value="RGD"/>
</dbReference>
<dbReference type="GO" id="GO:0000978">
    <property type="term" value="F:RNA polymerase II cis-regulatory region sequence-specific DNA binding"/>
    <property type="evidence" value="ECO:0000266"/>
    <property type="project" value="RGD"/>
</dbReference>
<dbReference type="GO" id="GO:1990837">
    <property type="term" value="F:sequence-specific double-stranded DNA binding"/>
    <property type="evidence" value="ECO:0000266"/>
    <property type="project" value="RGD"/>
</dbReference>
<dbReference type="GO" id="GO:0008270">
    <property type="term" value="F:zinc ion binding"/>
    <property type="evidence" value="ECO:0007669"/>
    <property type="project" value="UniProtKB-KW"/>
</dbReference>
<dbReference type="GO" id="GO:1990859">
    <property type="term" value="P:cellular response to endothelin"/>
    <property type="evidence" value="ECO:0000270"/>
    <property type="project" value="RGD"/>
</dbReference>
<dbReference type="GO" id="GO:0070301">
    <property type="term" value="P:cellular response to hydrogen peroxide"/>
    <property type="evidence" value="ECO:0000270"/>
    <property type="project" value="RGD"/>
</dbReference>
<dbReference type="GO" id="GO:0019221">
    <property type="term" value="P:cytokine-mediated signaling pathway"/>
    <property type="evidence" value="ECO:0000266"/>
    <property type="project" value="RGD"/>
</dbReference>
<dbReference type="GO" id="GO:1905205">
    <property type="term" value="P:positive regulation of connective tissue replacement"/>
    <property type="evidence" value="ECO:0000266"/>
    <property type="project" value="RGD"/>
</dbReference>
<dbReference type="GO" id="GO:0045944">
    <property type="term" value="P:positive regulation of transcription by RNA polymerase II"/>
    <property type="evidence" value="ECO:0000314"/>
    <property type="project" value="RGD"/>
</dbReference>
<dbReference type="GO" id="GO:0006357">
    <property type="term" value="P:regulation of transcription by RNA polymerase II"/>
    <property type="evidence" value="ECO:0000318"/>
    <property type="project" value="GO_Central"/>
</dbReference>
<dbReference type="CDD" id="cd21586">
    <property type="entry name" value="KLF6_N"/>
    <property type="match status" value="1"/>
</dbReference>
<dbReference type="FunFam" id="3.30.160.60:FF:000021">
    <property type="entry name" value="Basic krueppel-like factor 3"/>
    <property type="match status" value="1"/>
</dbReference>
<dbReference type="FunFam" id="3.30.160.60:FF:000018">
    <property type="entry name" value="Krueppel-like factor 15"/>
    <property type="match status" value="1"/>
</dbReference>
<dbReference type="FunFam" id="3.30.160.60:FF:000624">
    <property type="entry name" value="zinc finger protein 697"/>
    <property type="match status" value="1"/>
</dbReference>
<dbReference type="Gene3D" id="3.30.160.60">
    <property type="entry name" value="Classic Zinc Finger"/>
    <property type="match status" value="3"/>
</dbReference>
<dbReference type="InterPro" id="IPR036236">
    <property type="entry name" value="Znf_C2H2_sf"/>
</dbReference>
<dbReference type="InterPro" id="IPR013087">
    <property type="entry name" value="Znf_C2H2_type"/>
</dbReference>
<dbReference type="PANTHER" id="PTHR23235:SF50">
    <property type="entry name" value="KRUEPPEL-LIKE FACTOR 6"/>
    <property type="match status" value="1"/>
</dbReference>
<dbReference type="PANTHER" id="PTHR23235">
    <property type="entry name" value="KRUEPPEL-LIKE TRANSCRIPTION FACTOR"/>
    <property type="match status" value="1"/>
</dbReference>
<dbReference type="Pfam" id="PF00096">
    <property type="entry name" value="zf-C2H2"/>
    <property type="match status" value="3"/>
</dbReference>
<dbReference type="SMART" id="SM00355">
    <property type="entry name" value="ZnF_C2H2"/>
    <property type="match status" value="3"/>
</dbReference>
<dbReference type="SUPFAM" id="SSF57667">
    <property type="entry name" value="beta-beta-alpha zinc fingers"/>
    <property type="match status" value="2"/>
</dbReference>
<dbReference type="PROSITE" id="PS00028">
    <property type="entry name" value="ZINC_FINGER_C2H2_1"/>
    <property type="match status" value="3"/>
</dbReference>
<dbReference type="PROSITE" id="PS50157">
    <property type="entry name" value="ZINC_FINGER_C2H2_2"/>
    <property type="match status" value="3"/>
</dbReference>
<proteinExistence type="evidence at transcript level"/>